<gene>
    <name evidence="1" type="primary">glpG</name>
    <name type="ordered locus">YPTS_3974</name>
</gene>
<protein>
    <recommendedName>
        <fullName evidence="1">Rhomboid protease GlpG</fullName>
        <ecNumber evidence="1">3.4.21.105</ecNumber>
    </recommendedName>
    <alternativeName>
        <fullName evidence="1">Intramembrane serine protease</fullName>
    </alternativeName>
</protein>
<feature type="chain" id="PRO_1000147869" description="Rhomboid protease GlpG">
    <location>
        <begin position="1"/>
        <end position="278"/>
    </location>
</feature>
<feature type="transmembrane region" description="Helical" evidence="1">
    <location>
        <begin position="94"/>
        <end position="114"/>
    </location>
</feature>
<feature type="transmembrane region" description="Helical" evidence="1">
    <location>
        <begin position="143"/>
        <end position="163"/>
    </location>
</feature>
<feature type="transmembrane region" description="Helical" evidence="1">
    <location>
        <begin position="175"/>
        <end position="195"/>
    </location>
</feature>
<feature type="transmembrane region" description="Helical" evidence="1">
    <location>
        <begin position="196"/>
        <end position="216"/>
    </location>
</feature>
<feature type="transmembrane region" description="Helical" evidence="1">
    <location>
        <begin position="230"/>
        <end position="250"/>
    </location>
</feature>
<feature type="active site" description="Nucleophile" evidence="1">
    <location>
        <position position="202"/>
    </location>
</feature>
<feature type="active site" evidence="1">
    <location>
        <position position="255"/>
    </location>
</feature>
<keyword id="KW-0997">Cell inner membrane</keyword>
<keyword id="KW-1003">Cell membrane</keyword>
<keyword id="KW-0378">Hydrolase</keyword>
<keyword id="KW-0472">Membrane</keyword>
<keyword id="KW-0645">Protease</keyword>
<keyword id="KW-0720">Serine protease</keyword>
<keyword id="KW-0812">Transmembrane</keyword>
<keyword id="KW-1133">Transmembrane helix</keyword>
<reference key="1">
    <citation type="submission" date="2008-04" db="EMBL/GenBank/DDBJ databases">
        <title>Complete sequence of Yersinia pseudotuberculosis PB1/+.</title>
        <authorList>
            <person name="Copeland A."/>
            <person name="Lucas S."/>
            <person name="Lapidus A."/>
            <person name="Glavina del Rio T."/>
            <person name="Dalin E."/>
            <person name="Tice H."/>
            <person name="Bruce D."/>
            <person name="Goodwin L."/>
            <person name="Pitluck S."/>
            <person name="Munk A.C."/>
            <person name="Brettin T."/>
            <person name="Detter J.C."/>
            <person name="Han C."/>
            <person name="Tapia R."/>
            <person name="Schmutz J."/>
            <person name="Larimer F."/>
            <person name="Land M."/>
            <person name="Hauser L."/>
            <person name="Challacombe J.F."/>
            <person name="Green L."/>
            <person name="Lindler L.E."/>
            <person name="Nikolich M.P."/>
            <person name="Richardson P."/>
        </authorList>
    </citation>
    <scope>NUCLEOTIDE SEQUENCE [LARGE SCALE GENOMIC DNA]</scope>
    <source>
        <strain>PB1/+</strain>
    </source>
</reference>
<evidence type="ECO:0000255" key="1">
    <source>
        <dbReference type="HAMAP-Rule" id="MF_01594"/>
    </source>
</evidence>
<accession>B2K5W4</accession>
<name>GLPG_YERPB</name>
<proteinExistence type="inferred from homology"/>
<organism>
    <name type="scientific">Yersinia pseudotuberculosis serotype IB (strain PB1/+)</name>
    <dbReference type="NCBI Taxonomy" id="502801"/>
    <lineage>
        <taxon>Bacteria</taxon>
        <taxon>Pseudomonadati</taxon>
        <taxon>Pseudomonadota</taxon>
        <taxon>Gammaproteobacteria</taxon>
        <taxon>Enterobacterales</taxon>
        <taxon>Yersiniaceae</taxon>
        <taxon>Yersinia</taxon>
    </lineage>
</organism>
<sequence length="278" mass="31305">MTRVIVISNLRLAQAFVDYMATHHVALEIRPDAQGVEIWLADDEQLSAVQHELEQFLLDPLNPRYQAASWQAGNVNSNLPYQRFSYLQTLRSQAGPLTLSVMVLCIAIYILMLITGDMAVMSWLAWPYNSSQYLQIWRWVSHAFLHFSLLHILFNLMWWWYLGGQMEKRLGTSKLLVLTIVSAVFSGWGQSLFSGANFGGLSGVVYALMGYVWLTGERAPERGISLPRGLMAFSVLWLIAGYFDILGLSIANAAHVSGLIIGLLMAFWDTRNSARTVQ</sequence>
<comment type="function">
    <text evidence="1">Rhomboid-type serine protease that catalyzes intramembrane proteolysis.</text>
</comment>
<comment type="catalytic activity">
    <reaction evidence="1">
        <text>Cleaves type-1 transmembrane domains using a catalytic dyad composed of serine and histidine that are contributed by different transmembrane domains.</text>
        <dbReference type="EC" id="3.4.21.105"/>
    </reaction>
</comment>
<comment type="subcellular location">
    <subcellularLocation>
        <location evidence="1">Cell inner membrane</location>
        <topology evidence="1">Multi-pass membrane protein</topology>
    </subcellularLocation>
</comment>
<comment type="similarity">
    <text evidence="1">Belongs to the peptidase S54 family.</text>
</comment>
<dbReference type="EC" id="3.4.21.105" evidence="1"/>
<dbReference type="EMBL" id="CP001048">
    <property type="protein sequence ID" value="ACC90923.1"/>
    <property type="molecule type" value="Genomic_DNA"/>
</dbReference>
<dbReference type="RefSeq" id="WP_002216348.1">
    <property type="nucleotide sequence ID" value="NZ_CP009780.1"/>
</dbReference>
<dbReference type="SMR" id="B2K5W4"/>
<dbReference type="MEROPS" id="S54.016"/>
<dbReference type="GeneID" id="57974477"/>
<dbReference type="KEGG" id="ypb:YPTS_3974"/>
<dbReference type="PATRIC" id="fig|502801.10.peg.3440"/>
<dbReference type="GO" id="GO:0005886">
    <property type="term" value="C:plasma membrane"/>
    <property type="evidence" value="ECO:0007669"/>
    <property type="project" value="UniProtKB-SubCell"/>
</dbReference>
<dbReference type="GO" id="GO:0004252">
    <property type="term" value="F:serine-type endopeptidase activity"/>
    <property type="evidence" value="ECO:0007669"/>
    <property type="project" value="UniProtKB-UniRule"/>
</dbReference>
<dbReference type="GO" id="GO:0006508">
    <property type="term" value="P:proteolysis"/>
    <property type="evidence" value="ECO:0007669"/>
    <property type="project" value="UniProtKB-UniRule"/>
</dbReference>
<dbReference type="Gene3D" id="3.30.70.2350">
    <property type="match status" value="1"/>
</dbReference>
<dbReference type="Gene3D" id="1.20.1540.10">
    <property type="entry name" value="Rhomboid-like"/>
    <property type="match status" value="1"/>
</dbReference>
<dbReference type="HAMAP" id="MF_01594">
    <property type="entry name" value="Rhomboid_GlpG"/>
    <property type="match status" value="1"/>
</dbReference>
<dbReference type="InterPro" id="IPR038236">
    <property type="entry name" value="GlpG_N_sf"/>
</dbReference>
<dbReference type="InterPro" id="IPR022732">
    <property type="entry name" value="Peptidase_S54_GlpG_N"/>
</dbReference>
<dbReference type="InterPro" id="IPR022764">
    <property type="entry name" value="Peptidase_S54_rhomboid_dom"/>
</dbReference>
<dbReference type="InterPro" id="IPR035952">
    <property type="entry name" value="Rhomboid-like_sf"/>
</dbReference>
<dbReference type="InterPro" id="IPR023662">
    <property type="entry name" value="Rhomboid_protease_GlpG"/>
</dbReference>
<dbReference type="NCBIfam" id="NF008155">
    <property type="entry name" value="PRK10907.1"/>
    <property type="match status" value="1"/>
</dbReference>
<dbReference type="NCBIfam" id="TIGR04239">
    <property type="entry name" value="rhombo_GlpG"/>
    <property type="match status" value="1"/>
</dbReference>
<dbReference type="PANTHER" id="PTHR43066:SF26">
    <property type="entry name" value="RHOMBOID PROTEASE GLPG"/>
    <property type="match status" value="1"/>
</dbReference>
<dbReference type="PANTHER" id="PTHR43066">
    <property type="entry name" value="RHOMBOID-RELATED PROTEIN"/>
    <property type="match status" value="1"/>
</dbReference>
<dbReference type="Pfam" id="PF01694">
    <property type="entry name" value="Rhomboid"/>
    <property type="match status" value="1"/>
</dbReference>
<dbReference type="Pfam" id="PF12122">
    <property type="entry name" value="Rhomboid_N"/>
    <property type="match status" value="1"/>
</dbReference>
<dbReference type="SUPFAM" id="SSF144091">
    <property type="entry name" value="Rhomboid-like"/>
    <property type="match status" value="1"/>
</dbReference>